<protein>
    <recommendedName>
        <fullName>BPI fold-containing family A member 1</fullName>
    </recommendedName>
    <alternativeName>
        <fullName>Palate lung and nasal epithelium clone protein</fullName>
    </alternativeName>
</protein>
<dbReference type="EMBL" id="AF393750">
    <property type="protein sequence ID" value="AAM73687.1"/>
    <property type="molecule type" value="mRNA"/>
</dbReference>
<dbReference type="RefSeq" id="NP_742028.1">
    <property type="nucleotide sequence ID" value="NM_172031.2"/>
</dbReference>
<dbReference type="SMR" id="Q8K4I4"/>
<dbReference type="FunCoup" id="Q8K4I4">
    <property type="interactions" value="13"/>
</dbReference>
<dbReference type="STRING" id="10116.ENSRNOP00000018581"/>
<dbReference type="GlyCosmos" id="Q8K4I4">
    <property type="glycosylation" value="1 site, No reported glycans"/>
</dbReference>
<dbReference type="GlyGen" id="Q8K4I4">
    <property type="glycosylation" value="1 site"/>
</dbReference>
<dbReference type="PhosphoSitePlus" id="Q8K4I4"/>
<dbReference type="PaxDb" id="10116-ENSRNOP00000018581"/>
<dbReference type="Ensembl" id="ENSRNOT00000018581.5">
    <property type="protein sequence ID" value="ENSRNOP00000018581.3"/>
    <property type="gene ID" value="ENSRNOG00000013859.5"/>
</dbReference>
<dbReference type="GeneID" id="246238"/>
<dbReference type="KEGG" id="rno:246238"/>
<dbReference type="UCSC" id="RGD:619818">
    <property type="organism name" value="rat"/>
</dbReference>
<dbReference type="AGR" id="RGD:619818"/>
<dbReference type="CTD" id="51297"/>
<dbReference type="RGD" id="619818">
    <property type="gene designation" value="Bpifa1"/>
</dbReference>
<dbReference type="eggNOG" id="ENOG502SR58">
    <property type="taxonomic scope" value="Eukaryota"/>
</dbReference>
<dbReference type="GeneTree" id="ENSGT01100000263546"/>
<dbReference type="HOGENOM" id="CLU_095915_0_0_1"/>
<dbReference type="InParanoid" id="Q8K4I4"/>
<dbReference type="OMA" id="ANMLIHG"/>
<dbReference type="OrthoDB" id="9835719at2759"/>
<dbReference type="PhylomeDB" id="Q8K4I4"/>
<dbReference type="TreeFam" id="TF337052"/>
<dbReference type="Reactome" id="R-RNO-6803157">
    <property type="pathway name" value="Antimicrobial peptides"/>
</dbReference>
<dbReference type="PRO" id="PR:Q8K4I4"/>
<dbReference type="Proteomes" id="UP000002494">
    <property type="component" value="Chromosome 3"/>
</dbReference>
<dbReference type="Bgee" id="ENSRNOG00000013859">
    <property type="expression patterns" value="Expressed in lung and 4 other cell types or tissues"/>
</dbReference>
<dbReference type="GO" id="GO:0005576">
    <property type="term" value="C:extracellular region"/>
    <property type="evidence" value="ECO:0000250"/>
    <property type="project" value="UniProtKB"/>
</dbReference>
<dbReference type="GO" id="GO:0005615">
    <property type="term" value="C:extracellular space"/>
    <property type="evidence" value="ECO:0000250"/>
    <property type="project" value="UniProtKB"/>
</dbReference>
<dbReference type="GO" id="GO:0005902">
    <property type="term" value="C:microvillus"/>
    <property type="evidence" value="ECO:0000314"/>
    <property type="project" value="RGD"/>
</dbReference>
<dbReference type="GO" id="GO:0008289">
    <property type="term" value="F:lipid binding"/>
    <property type="evidence" value="ECO:0007669"/>
    <property type="project" value="UniProtKB-KW"/>
</dbReference>
<dbReference type="GO" id="GO:0019731">
    <property type="term" value="P:antibacterial humoral response"/>
    <property type="evidence" value="ECO:0000250"/>
    <property type="project" value="UniProtKB"/>
</dbReference>
<dbReference type="GO" id="GO:0061844">
    <property type="term" value="P:antimicrobial humoral immune response mediated by antimicrobial peptide"/>
    <property type="evidence" value="ECO:0000266"/>
    <property type="project" value="RGD"/>
</dbReference>
<dbReference type="GO" id="GO:0002395">
    <property type="term" value="P:immune response in nasopharyngeal-associated lymphoid tissue"/>
    <property type="evidence" value="ECO:0000266"/>
    <property type="project" value="RGD"/>
</dbReference>
<dbReference type="GO" id="GO:0045087">
    <property type="term" value="P:innate immune response"/>
    <property type="evidence" value="ECO:0000250"/>
    <property type="project" value="UniProtKB"/>
</dbReference>
<dbReference type="GO" id="GO:0050891">
    <property type="term" value="P:multicellular organismal-level water homeostasis"/>
    <property type="evidence" value="ECO:0000250"/>
    <property type="project" value="UniProtKB"/>
</dbReference>
<dbReference type="GO" id="GO:1900229">
    <property type="term" value="P:negative regulation of single-species biofilm formation in or on host organism"/>
    <property type="evidence" value="ECO:0000250"/>
    <property type="project" value="UniProtKB"/>
</dbReference>
<dbReference type="GO" id="GO:1902305">
    <property type="term" value="P:regulation of sodium ion transmembrane transport"/>
    <property type="evidence" value="ECO:0000250"/>
    <property type="project" value="UniProtKB"/>
</dbReference>
<dbReference type="GO" id="GO:0043129">
    <property type="term" value="P:surfactant homeostasis"/>
    <property type="evidence" value="ECO:0000250"/>
    <property type="project" value="UniProtKB"/>
</dbReference>
<dbReference type="FunFam" id="3.15.10.10:FF:000003">
    <property type="entry name" value="BPI fold-containing family A member 1"/>
    <property type="match status" value="1"/>
</dbReference>
<dbReference type="Gene3D" id="3.15.10.10">
    <property type="entry name" value="Bactericidal permeability-increasing protein, domain 1"/>
    <property type="match status" value="1"/>
</dbReference>
<dbReference type="InterPro" id="IPR017943">
    <property type="entry name" value="Bactericidal_perm-incr_a/b_dom"/>
</dbReference>
<dbReference type="InterPro" id="IPR051902">
    <property type="entry name" value="BPI_fold-superfamily_member"/>
</dbReference>
<dbReference type="InterPro" id="IPR017942">
    <property type="entry name" value="Lipid-bd_serum_glycop_N"/>
</dbReference>
<dbReference type="PANTHER" id="PTHR47015">
    <property type="entry name" value="BPI FOLD-CONTAINING FAMILY A MEMBER 1"/>
    <property type="match status" value="1"/>
</dbReference>
<dbReference type="PANTHER" id="PTHR47015:SF1">
    <property type="entry name" value="BPI FOLD-CONTAINING FAMILY A MEMBER 1"/>
    <property type="match status" value="1"/>
</dbReference>
<dbReference type="Pfam" id="PF01273">
    <property type="entry name" value="LBP_BPI_CETP"/>
    <property type="match status" value="1"/>
</dbReference>
<dbReference type="SUPFAM" id="SSF55394">
    <property type="entry name" value="Bactericidal permeability-increasing protein, BPI"/>
    <property type="match status" value="1"/>
</dbReference>
<organism>
    <name type="scientific">Rattus norvegicus</name>
    <name type="common">Rat</name>
    <dbReference type="NCBI Taxonomy" id="10116"/>
    <lineage>
        <taxon>Eukaryota</taxon>
        <taxon>Metazoa</taxon>
        <taxon>Chordata</taxon>
        <taxon>Craniata</taxon>
        <taxon>Vertebrata</taxon>
        <taxon>Euteleostomi</taxon>
        <taxon>Mammalia</taxon>
        <taxon>Eutheria</taxon>
        <taxon>Euarchontoglires</taxon>
        <taxon>Glires</taxon>
        <taxon>Rodentia</taxon>
        <taxon>Myomorpha</taxon>
        <taxon>Muroidea</taxon>
        <taxon>Muridae</taxon>
        <taxon>Murinae</taxon>
        <taxon>Rattus</taxon>
    </lineage>
</organism>
<sequence>MFLVGSLVVLCGLLAQSTAQLAGLPLPLGQGLPLPLGQGLPLPLGQGLPLAVSPALPSNPTDLLAGNFANALSGGLLSGGLLGILENIPLLDVIKSGGGSSNGLVGGLLGKLTSSVPLLNNILDIKITDPRLLELGLVQSPDGHRLYATIPLSLKLQVNMPVVGSFLQLAVKLNITAEIVAMKDNQGRIHLVLGDCTHSPGSLQITLLNGVTPVQSSLDSLTGILTKVLPELIQGKVCPLINGILSGLDVTLVHNIAELLIHGIQFVIKV</sequence>
<keyword id="KW-0044">Antibiotic</keyword>
<keyword id="KW-0929">Antimicrobial</keyword>
<keyword id="KW-1015">Disulfide bond</keyword>
<keyword id="KW-0325">Glycoprotein</keyword>
<keyword id="KW-0391">Immunity</keyword>
<keyword id="KW-0399">Innate immunity</keyword>
<keyword id="KW-0446">Lipid-binding</keyword>
<keyword id="KW-1185">Reference proteome</keyword>
<keyword id="KW-0964">Secreted</keyword>
<keyword id="KW-0732">Signal</keyword>
<accession>Q8K4I4</accession>
<evidence type="ECO:0000250" key="1"/>
<evidence type="ECO:0000250" key="2">
    <source>
        <dbReference type="UniProtKB" id="Q9NP55"/>
    </source>
</evidence>
<evidence type="ECO:0000255" key="3"/>
<evidence type="ECO:0000269" key="4">
    <source>
    </source>
</evidence>
<evidence type="ECO:0000305" key="5"/>
<reference key="1">
    <citation type="journal article" date="2002" name="J. Biol. Chem.">
        <title>Plunc, a member of the secretory gland protein family, is up-regulated in nasal respiratory epithelium after olfactory bulbectomy.</title>
        <authorList>
            <person name="Sung Y.K."/>
            <person name="Moon C."/>
            <person name="Yoo J.-Y."/>
            <person name="Moon C."/>
            <person name="Pearse D."/>
            <person name="Pevsner J."/>
            <person name="Ronnett G.V."/>
        </authorList>
    </citation>
    <scope>NUCLEOTIDE SEQUENCE [MRNA]</scope>
    <scope>SUBCELLULAR LOCATION</scope>
    <scope>TISSUE SPECIFICITY</scope>
    <scope>INDUCTION</scope>
    <source>
        <strain>Sprague-Dawley</strain>
        <tissue>Nasal epithelium</tissue>
    </source>
</reference>
<gene>
    <name type="primary">Bpifa1</name>
    <name type="synonym">Plunc</name>
</gene>
<name>BPIA1_RAT</name>
<proteinExistence type="evidence at transcript level"/>
<feature type="signal peptide" evidence="3">
    <location>
        <begin position="1"/>
        <end position="19"/>
    </location>
</feature>
<feature type="chain" id="PRO_0000017178" description="BPI fold-containing family A member 1">
    <location>
        <begin position="20"/>
        <end position="270"/>
    </location>
</feature>
<feature type="region of interest" description="Important for surfactant activity and antibacterial properties" evidence="2">
    <location>
        <begin position="104"/>
        <end position="109"/>
    </location>
</feature>
<feature type="glycosylation site" description="N-linked (GlcNAc...) asparagine" evidence="3">
    <location>
        <position position="174"/>
    </location>
</feature>
<feature type="disulfide bond" evidence="2">
    <location>
        <begin position="196"/>
        <end position="238"/>
    </location>
</feature>
<comment type="function">
    <text evidence="2">Lipid-binding protein which shows high specificity for the surfactant phospholipid dipalmitoylphosphatidylcholine (DPPC). Plays a role in the innate immune responses of the upper airways. Reduces the surface tension in secretions from airway epithelia and inhibits the formation of biofilm by pathogenic Gram-negative bacteria, such as P.aeruginosa and K.pneumoniae. Negatively regulates proteolytic cleavage of SCNN1G, an event that is required for activation of the epithelial sodium channel (ENaC), and thereby contributes to airway surface liquid homeostasis and proper clearance of mucus. Plays a role in the airway inflammatory response after exposure to irritants. May attract macrophages and neutrophils.</text>
</comment>
<comment type="subunit">
    <text evidence="1">Monomer. Interacts (via N-terminus) with SCNN1B, a subunit of the heterotrimeric epithelial sodium channel (ENaC); this inhibits proteolytic activation of ENaC (By similarity).</text>
</comment>
<comment type="subcellular location">
    <subcellularLocation>
        <location evidence="4">Secreted</location>
    </subcellularLocation>
    <text>Apical side of airway epithelial cells. Detected in airway surface liquid, nasal mucus and sputum.</text>
</comment>
<comment type="tissue specificity">
    <text evidence="4">Detected in adult nasal epithelium, heart, lung, spleen, testis and salivary gland, and in embryonic nasal epithelium, lung, salivary gland and thymus.</text>
</comment>
<comment type="induction">
    <text evidence="4">After bulbectomy or lesion of the olfactory bulb.</text>
</comment>
<comment type="similarity">
    <text evidence="5">Belongs to the BPI/LBP/Plunc superfamily. Plunc family.</text>
</comment>
<comment type="caution">
    <text evidence="2">Reported to bind to bacterial lipopolysaccharide (LPS) in vitro. However, the in vivo significance of this is uncertain since other studies indicate little or no specificity for LPS.</text>
</comment>